<gene>
    <name evidence="5" type="primary">TOZ</name>
    <name evidence="7" type="ordered locus">At5g16750</name>
    <name evidence="8" type="ORF">F5E19.90</name>
</gene>
<name>TOZ_ARATH</name>
<evidence type="ECO:0000255" key="1"/>
<evidence type="ECO:0000255" key="2">
    <source>
        <dbReference type="PROSITE-ProRule" id="PRU00768"/>
    </source>
</evidence>
<evidence type="ECO:0000256" key="3">
    <source>
        <dbReference type="SAM" id="MobiDB-lite"/>
    </source>
</evidence>
<evidence type="ECO:0000269" key="4">
    <source>
    </source>
</evidence>
<evidence type="ECO:0000303" key="5">
    <source>
    </source>
</evidence>
<evidence type="ECO:0000305" key="6"/>
<evidence type="ECO:0000312" key="7">
    <source>
        <dbReference type="Araport" id="AT5G16750"/>
    </source>
</evidence>
<evidence type="ECO:0000312" key="8">
    <source>
        <dbReference type="EMBL" id="AED92333.1"/>
    </source>
</evidence>
<reference key="1">
    <citation type="journal article" date="2000" name="Nature">
        <title>Sequence and analysis of chromosome 5 of the plant Arabidopsis thaliana.</title>
        <authorList>
            <person name="Tabata S."/>
            <person name="Kaneko T."/>
            <person name="Nakamura Y."/>
            <person name="Kotani H."/>
            <person name="Kato T."/>
            <person name="Asamizu E."/>
            <person name="Miyajima N."/>
            <person name="Sasamoto S."/>
            <person name="Kimura T."/>
            <person name="Hosouchi T."/>
            <person name="Kawashima K."/>
            <person name="Kohara M."/>
            <person name="Matsumoto M."/>
            <person name="Matsuno A."/>
            <person name="Muraki A."/>
            <person name="Nakayama S."/>
            <person name="Nakazaki N."/>
            <person name="Naruo K."/>
            <person name="Okumura S."/>
            <person name="Shinpo S."/>
            <person name="Takeuchi C."/>
            <person name="Wada T."/>
            <person name="Watanabe A."/>
            <person name="Yamada M."/>
            <person name="Yasuda M."/>
            <person name="Sato S."/>
            <person name="de la Bastide M."/>
            <person name="Huang E."/>
            <person name="Spiegel L."/>
            <person name="Gnoj L."/>
            <person name="O'Shaughnessy A."/>
            <person name="Preston R."/>
            <person name="Habermann K."/>
            <person name="Murray J."/>
            <person name="Johnson D."/>
            <person name="Rohlfing T."/>
            <person name="Nelson J."/>
            <person name="Stoneking T."/>
            <person name="Pepin K."/>
            <person name="Spieth J."/>
            <person name="Sekhon M."/>
            <person name="Armstrong J."/>
            <person name="Becker M."/>
            <person name="Belter E."/>
            <person name="Cordum H."/>
            <person name="Cordes M."/>
            <person name="Courtney L."/>
            <person name="Courtney W."/>
            <person name="Dante M."/>
            <person name="Du H."/>
            <person name="Edwards J."/>
            <person name="Fryman J."/>
            <person name="Haakensen B."/>
            <person name="Lamar E."/>
            <person name="Latreille P."/>
            <person name="Leonard S."/>
            <person name="Meyer R."/>
            <person name="Mulvaney E."/>
            <person name="Ozersky P."/>
            <person name="Riley A."/>
            <person name="Strowmatt C."/>
            <person name="Wagner-McPherson C."/>
            <person name="Wollam A."/>
            <person name="Yoakum M."/>
            <person name="Bell M."/>
            <person name="Dedhia N."/>
            <person name="Parnell L."/>
            <person name="Shah R."/>
            <person name="Rodriguez M."/>
            <person name="Hoon See L."/>
            <person name="Vil D."/>
            <person name="Baker J."/>
            <person name="Kirchoff K."/>
            <person name="Toth K."/>
            <person name="King L."/>
            <person name="Bahret A."/>
            <person name="Miller B."/>
            <person name="Marra M.A."/>
            <person name="Martienssen R."/>
            <person name="McCombie W.R."/>
            <person name="Wilson R.K."/>
            <person name="Murphy G."/>
            <person name="Bancroft I."/>
            <person name="Volckaert G."/>
            <person name="Wambutt R."/>
            <person name="Duesterhoeft A."/>
            <person name="Stiekema W."/>
            <person name="Pohl T."/>
            <person name="Entian K.-D."/>
            <person name="Terryn N."/>
            <person name="Hartley N."/>
            <person name="Bent E."/>
            <person name="Johnson S."/>
            <person name="Langham S.-A."/>
            <person name="McCullagh B."/>
            <person name="Robben J."/>
            <person name="Grymonprez B."/>
            <person name="Zimmermann W."/>
            <person name="Ramsperger U."/>
            <person name="Wedler H."/>
            <person name="Balke K."/>
            <person name="Wedler E."/>
            <person name="Peters S."/>
            <person name="van Staveren M."/>
            <person name="Dirkse W."/>
            <person name="Mooijman P."/>
            <person name="Klein Lankhorst R."/>
            <person name="Weitzenegger T."/>
            <person name="Bothe G."/>
            <person name="Rose M."/>
            <person name="Hauf J."/>
            <person name="Berneiser S."/>
            <person name="Hempel S."/>
            <person name="Feldpausch M."/>
            <person name="Lamberth S."/>
            <person name="Villarroel R."/>
            <person name="Gielen J."/>
            <person name="Ardiles W."/>
            <person name="Bents O."/>
            <person name="Lemcke K."/>
            <person name="Kolesov G."/>
            <person name="Mayer K.F.X."/>
            <person name="Rudd S."/>
            <person name="Schoof H."/>
            <person name="Schueller C."/>
            <person name="Zaccaria P."/>
            <person name="Mewes H.-W."/>
            <person name="Bevan M."/>
            <person name="Fransz P.F."/>
        </authorList>
    </citation>
    <scope>NUCLEOTIDE SEQUENCE [LARGE SCALE GENOMIC DNA]</scope>
    <source>
        <strain>cv. Columbia</strain>
    </source>
</reference>
<reference key="2">
    <citation type="journal article" date="2017" name="Plant J.">
        <title>Araport11: a complete reannotation of the Arabidopsis thaliana reference genome.</title>
        <authorList>
            <person name="Cheng C.Y."/>
            <person name="Krishnakumar V."/>
            <person name="Chan A.P."/>
            <person name="Thibaud-Nissen F."/>
            <person name="Schobel S."/>
            <person name="Town C.D."/>
        </authorList>
    </citation>
    <scope>GENOME REANNOTATION</scope>
    <source>
        <strain>cv. Columbia</strain>
    </source>
</reference>
<reference key="3">
    <citation type="journal article" date="2003" name="Science">
        <title>Empirical analysis of transcriptional activity in the Arabidopsis genome.</title>
        <authorList>
            <person name="Yamada K."/>
            <person name="Lim J."/>
            <person name="Dale J.M."/>
            <person name="Chen H."/>
            <person name="Shinn P."/>
            <person name="Palm C.J."/>
            <person name="Southwick A.M."/>
            <person name="Wu H.C."/>
            <person name="Kim C.J."/>
            <person name="Nguyen M."/>
            <person name="Pham P.K."/>
            <person name="Cheuk R.F."/>
            <person name="Karlin-Newmann G."/>
            <person name="Liu S.X."/>
            <person name="Lam B."/>
            <person name="Sakano H."/>
            <person name="Wu T."/>
            <person name="Yu G."/>
            <person name="Miranda M."/>
            <person name="Quach H.L."/>
            <person name="Tripp M."/>
            <person name="Chang C.H."/>
            <person name="Lee J.M."/>
            <person name="Toriumi M.J."/>
            <person name="Chan M.M."/>
            <person name="Tang C.C."/>
            <person name="Onodera C.S."/>
            <person name="Deng J.M."/>
            <person name="Akiyama K."/>
            <person name="Ansari Y."/>
            <person name="Arakawa T."/>
            <person name="Banh J."/>
            <person name="Banno F."/>
            <person name="Bowser L."/>
            <person name="Brooks S.Y."/>
            <person name="Carninci P."/>
            <person name="Chao Q."/>
            <person name="Choy N."/>
            <person name="Enju A."/>
            <person name="Goldsmith A.D."/>
            <person name="Gurjal M."/>
            <person name="Hansen N.F."/>
            <person name="Hayashizaki Y."/>
            <person name="Johnson-Hopson C."/>
            <person name="Hsuan V.W."/>
            <person name="Iida K."/>
            <person name="Karnes M."/>
            <person name="Khan S."/>
            <person name="Koesema E."/>
            <person name="Ishida J."/>
            <person name="Jiang P.X."/>
            <person name="Jones T."/>
            <person name="Kawai J."/>
            <person name="Kamiya A."/>
            <person name="Meyers C."/>
            <person name="Nakajima M."/>
            <person name="Narusaka M."/>
            <person name="Seki M."/>
            <person name="Sakurai T."/>
            <person name="Satou M."/>
            <person name="Tamse R."/>
            <person name="Vaysberg M."/>
            <person name="Wallender E.K."/>
            <person name="Wong C."/>
            <person name="Yamamura Y."/>
            <person name="Yuan S."/>
            <person name="Shinozaki K."/>
            <person name="Davis R.W."/>
            <person name="Theologis A."/>
            <person name="Ecker J.R."/>
        </authorList>
    </citation>
    <scope>NUCLEOTIDE SEQUENCE [LARGE SCALE MRNA]</scope>
    <source>
        <strain>cv. Columbia</strain>
    </source>
</reference>
<reference key="4">
    <citation type="submission" date="1996-03" db="EMBL/GenBank/DDBJ databases">
        <title>The Arabidopsis thaliana transcribed genome: the GDR cDNA program.</title>
        <authorList>
            <person name="Cooke R."/>
            <person name="Laudie M."/>
            <person name="Raynal M."/>
            <person name="Delseny M."/>
        </authorList>
    </citation>
    <scope>NUCLEOTIDE SEQUENCE [MRNA] OF 183-276</scope>
    <source>
        <strain>cv. Columbia</strain>
        <tissue>Protoplast</tissue>
    </source>
</reference>
<reference key="5">
    <citation type="journal article" date="2007" name="Mol. Cell. Proteomics">
        <title>Multidimensional protein identification technology (MudPIT) analysis of ubiquitinated proteins in plants.</title>
        <authorList>
            <person name="Maor R."/>
            <person name="Jones A."/>
            <person name="Nuehse T.S."/>
            <person name="Studholme D.J."/>
            <person name="Peck S.C."/>
            <person name="Shirasu K."/>
        </authorList>
    </citation>
    <scope>IDENTIFICATION BY MASS SPECTROMETRY [LARGE SCALE ANALYSIS]</scope>
</reference>
<reference key="6">
    <citation type="journal article" date="2007" name="Plant Cell">
        <title>The TORMOZ gene encodes a nucleolar protein required for regulated division planes and embryo development in Arabidopsis.</title>
        <authorList>
            <person name="Griffith M.E."/>
            <person name="Mayer U."/>
            <person name="Capron A."/>
            <person name="Ngo Q.A."/>
            <person name="Surendrarao A."/>
            <person name="McClinton R."/>
            <person name="Juergens G."/>
            <person name="Sundaresan V."/>
        </authorList>
    </citation>
    <scope>FUNCTION</scope>
    <scope>DISRUPTION PHENOTYPE</scope>
    <scope>SUBCELLULAR LOCATION</scope>
    <scope>TISSUE SPECIFICITY</scope>
    <scope>DEVELOPMENTAL STAGE</scope>
    <source>
        <strain>cv. Landsberg erecta</strain>
    </source>
</reference>
<reference key="7">
    <citation type="journal article" date="2020" name="New Phytol.">
        <title>Genome-wide identification of EMBRYO-DEFECTIVE (EMB) genes required for growth and development in Arabidopsis.</title>
        <authorList>
            <person name="Meinke D.W."/>
        </authorList>
    </citation>
    <scope>REVIEW ON EMBRYO-DEFECTIVE MUTANTS</scope>
</reference>
<proteinExistence type="evidence at protein level"/>
<organism>
    <name type="scientific">Arabidopsis thaliana</name>
    <name type="common">Mouse-ear cress</name>
    <dbReference type="NCBI Taxonomy" id="3702"/>
    <lineage>
        <taxon>Eukaryota</taxon>
        <taxon>Viridiplantae</taxon>
        <taxon>Streptophyta</taxon>
        <taxon>Embryophyta</taxon>
        <taxon>Tracheophyta</taxon>
        <taxon>Spermatophyta</taxon>
        <taxon>Magnoliopsida</taxon>
        <taxon>eudicotyledons</taxon>
        <taxon>Gunneridae</taxon>
        <taxon>Pentapetalae</taxon>
        <taxon>rosids</taxon>
        <taxon>malvids</taxon>
        <taxon>Brassicales</taxon>
        <taxon>Brassicaceae</taxon>
        <taxon>Camelineae</taxon>
        <taxon>Arabidopsis</taxon>
    </lineage>
</organism>
<protein>
    <recommendedName>
        <fullName evidence="5">Protein TORMOZ EMBRYO DEFECTIVE</fullName>
    </recommendedName>
</protein>
<dbReference type="EMBL" id="AL391147">
    <property type="protein sequence ID" value="CAC01839.1"/>
    <property type="molecule type" value="Genomic_DNA"/>
</dbReference>
<dbReference type="EMBL" id="CP002688">
    <property type="protein sequence ID" value="AED92333.1"/>
    <property type="molecule type" value="Genomic_DNA"/>
</dbReference>
<dbReference type="EMBL" id="AY056281">
    <property type="protein sequence ID" value="AAL07130.1"/>
    <property type="status" value="ALT_INIT"/>
    <property type="molecule type" value="mRNA"/>
</dbReference>
<dbReference type="EMBL" id="AY117219">
    <property type="protein sequence ID" value="AAM51294.1"/>
    <property type="molecule type" value="mRNA"/>
</dbReference>
<dbReference type="EMBL" id="AY120781">
    <property type="protein sequence ID" value="AAM53339.1"/>
    <property type="molecule type" value="mRNA"/>
</dbReference>
<dbReference type="EMBL" id="F19990">
    <property type="protein sequence ID" value="CAA23372.1"/>
    <property type="molecule type" value="mRNA"/>
</dbReference>
<dbReference type="PIR" id="T51507">
    <property type="entry name" value="T51507"/>
</dbReference>
<dbReference type="RefSeq" id="NP_568338.2">
    <property type="nucleotide sequence ID" value="NM_121681.4"/>
</dbReference>
<dbReference type="SMR" id="Q9LFE2"/>
<dbReference type="FunCoup" id="Q9LFE2">
    <property type="interactions" value="3930"/>
</dbReference>
<dbReference type="STRING" id="3702.Q9LFE2"/>
<dbReference type="iPTMnet" id="Q9LFE2"/>
<dbReference type="PaxDb" id="3702-AT5G16750.1"/>
<dbReference type="ProteomicsDB" id="181103"/>
<dbReference type="EnsemblPlants" id="AT5G16750.1">
    <property type="protein sequence ID" value="AT5G16750.1"/>
    <property type="gene ID" value="AT5G16750"/>
</dbReference>
<dbReference type="GeneID" id="831538"/>
<dbReference type="Gramene" id="AT5G16750.1">
    <property type="protein sequence ID" value="AT5G16750.1"/>
    <property type="gene ID" value="AT5G16750"/>
</dbReference>
<dbReference type="KEGG" id="ath:AT5G16750"/>
<dbReference type="Araport" id="AT5G16750"/>
<dbReference type="TAIR" id="AT5G16750">
    <property type="gene designation" value="TOZ"/>
</dbReference>
<dbReference type="eggNOG" id="KOG0319">
    <property type="taxonomic scope" value="Eukaryota"/>
</dbReference>
<dbReference type="HOGENOM" id="CLU_009276_0_0_1"/>
<dbReference type="InParanoid" id="Q9LFE2"/>
<dbReference type="OMA" id="PYVQRHF"/>
<dbReference type="PhylomeDB" id="Q9LFE2"/>
<dbReference type="CD-CODE" id="4299E36E">
    <property type="entry name" value="Nucleolus"/>
</dbReference>
<dbReference type="PRO" id="PR:Q9LFE2"/>
<dbReference type="Proteomes" id="UP000006548">
    <property type="component" value="Chromosome 5"/>
</dbReference>
<dbReference type="ExpressionAtlas" id="Q9LFE2">
    <property type="expression patterns" value="baseline and differential"/>
</dbReference>
<dbReference type="GO" id="GO:0005730">
    <property type="term" value="C:nucleolus"/>
    <property type="evidence" value="ECO:0000314"/>
    <property type="project" value="TAIR"/>
</dbReference>
<dbReference type="GO" id="GO:0032040">
    <property type="term" value="C:small-subunit processome"/>
    <property type="evidence" value="ECO:0007669"/>
    <property type="project" value="InterPro"/>
</dbReference>
<dbReference type="GO" id="GO:0051301">
    <property type="term" value="P:cell division"/>
    <property type="evidence" value="ECO:0000315"/>
    <property type="project" value="TAIR"/>
</dbReference>
<dbReference type="GO" id="GO:0009793">
    <property type="term" value="P:embryo development ending in seed dormancy"/>
    <property type="evidence" value="ECO:0000315"/>
    <property type="project" value="TAIR"/>
</dbReference>
<dbReference type="GO" id="GO:0009880">
    <property type="term" value="P:embryonic pattern specification"/>
    <property type="evidence" value="ECO:0000315"/>
    <property type="project" value="TAIR"/>
</dbReference>
<dbReference type="GO" id="GO:0006364">
    <property type="term" value="P:rRNA processing"/>
    <property type="evidence" value="ECO:0007669"/>
    <property type="project" value="InterPro"/>
</dbReference>
<dbReference type="CDD" id="cd00200">
    <property type="entry name" value="WD40"/>
    <property type="match status" value="2"/>
</dbReference>
<dbReference type="FunFam" id="2.130.10.10:FF:001129">
    <property type="entry name" value="Transducin beta-like protein 3"/>
    <property type="match status" value="1"/>
</dbReference>
<dbReference type="FunFam" id="2.130.10.10:FF:000794">
    <property type="entry name" value="Transducin family protein / WD-40 repeat family protein"/>
    <property type="match status" value="1"/>
</dbReference>
<dbReference type="FunFam" id="2.130.10.10:FF:001844">
    <property type="entry name" value="Transducin family protein / WD-40 repeat family protein"/>
    <property type="match status" value="1"/>
</dbReference>
<dbReference type="Gene3D" id="2.130.10.10">
    <property type="entry name" value="YVTN repeat-like/Quinoprotein amine dehydrogenase"/>
    <property type="match status" value="4"/>
</dbReference>
<dbReference type="InterPro" id="IPR020472">
    <property type="entry name" value="G-protein_beta_WD-40_rep"/>
</dbReference>
<dbReference type="InterPro" id="IPR011047">
    <property type="entry name" value="Quinoprotein_ADH-like_sf"/>
</dbReference>
<dbReference type="InterPro" id="IPR013934">
    <property type="entry name" value="Utp13_C"/>
</dbReference>
<dbReference type="InterPro" id="IPR015943">
    <property type="entry name" value="WD40/YVTN_repeat-like_dom_sf"/>
</dbReference>
<dbReference type="InterPro" id="IPR019775">
    <property type="entry name" value="WD40_repeat_CS"/>
</dbReference>
<dbReference type="InterPro" id="IPR036322">
    <property type="entry name" value="WD40_repeat_dom_sf"/>
</dbReference>
<dbReference type="InterPro" id="IPR001680">
    <property type="entry name" value="WD40_rpt"/>
</dbReference>
<dbReference type="PANTHER" id="PTHR19854">
    <property type="entry name" value="TRANSDUCIN BETA-LIKE 3"/>
    <property type="match status" value="1"/>
</dbReference>
<dbReference type="PANTHER" id="PTHR19854:SF15">
    <property type="entry name" value="TRANSDUCIN BETA-LIKE PROTEIN 3"/>
    <property type="match status" value="1"/>
</dbReference>
<dbReference type="Pfam" id="PF08625">
    <property type="entry name" value="Utp13"/>
    <property type="match status" value="1"/>
</dbReference>
<dbReference type="Pfam" id="PF00400">
    <property type="entry name" value="WD40"/>
    <property type="match status" value="10"/>
</dbReference>
<dbReference type="PRINTS" id="PR00320">
    <property type="entry name" value="GPROTEINBRPT"/>
</dbReference>
<dbReference type="SMART" id="SM00320">
    <property type="entry name" value="WD40"/>
    <property type="match status" value="11"/>
</dbReference>
<dbReference type="SUPFAM" id="SSF50998">
    <property type="entry name" value="Quinoprotein alcohol dehydrogenase-like"/>
    <property type="match status" value="1"/>
</dbReference>
<dbReference type="SUPFAM" id="SSF50978">
    <property type="entry name" value="WD40 repeat-like"/>
    <property type="match status" value="1"/>
</dbReference>
<dbReference type="PROSITE" id="PS00678">
    <property type="entry name" value="WD_REPEATS_1"/>
    <property type="match status" value="4"/>
</dbReference>
<dbReference type="PROSITE" id="PS50082">
    <property type="entry name" value="WD_REPEATS_2"/>
    <property type="match status" value="10"/>
</dbReference>
<dbReference type="PROSITE" id="PS50294">
    <property type="entry name" value="WD_REPEATS_REGION"/>
    <property type="match status" value="1"/>
</dbReference>
<feature type="chain" id="PRO_0000455301" description="Protein TORMOZ EMBRYO DEFECTIVE">
    <location>
        <begin position="1"/>
        <end position="876"/>
    </location>
</feature>
<feature type="repeat" description="WD 1" evidence="1">
    <location>
        <begin position="58"/>
        <end position="97"/>
    </location>
</feature>
<feature type="repeat" description="WD 2" evidence="1">
    <location>
        <begin position="100"/>
        <end position="139"/>
    </location>
</feature>
<feature type="repeat" description="WD 3" evidence="1">
    <location>
        <begin position="142"/>
        <end position="183"/>
    </location>
</feature>
<feature type="repeat" description="WD 4" evidence="1">
    <location>
        <begin position="190"/>
        <end position="229"/>
    </location>
</feature>
<feature type="repeat" description="WD 5" evidence="1">
    <location>
        <begin position="255"/>
        <end position="294"/>
    </location>
</feature>
<feature type="repeat" description="WD 6" evidence="1">
    <location>
        <begin position="308"/>
        <end position="347"/>
    </location>
</feature>
<feature type="repeat" description="WD 7" evidence="1">
    <location>
        <begin position="356"/>
        <end position="396"/>
    </location>
</feature>
<feature type="repeat" description="WD 8" evidence="1">
    <location>
        <begin position="399"/>
        <end position="441"/>
    </location>
</feature>
<feature type="repeat" description="WD 9" evidence="1">
    <location>
        <begin position="444"/>
        <end position="484"/>
    </location>
</feature>
<feature type="repeat" description="WD 10" evidence="1">
    <location>
        <begin position="497"/>
        <end position="536"/>
    </location>
</feature>
<feature type="repeat" description="WD 11" evidence="1">
    <location>
        <begin position="539"/>
        <end position="580"/>
    </location>
</feature>
<feature type="repeat" description="WD 12" evidence="1">
    <location>
        <begin position="581"/>
        <end position="620"/>
    </location>
</feature>
<feature type="repeat" description="WD 13" evidence="1">
    <location>
        <begin position="623"/>
        <end position="662"/>
    </location>
</feature>
<feature type="region of interest" description="Disordered" evidence="3">
    <location>
        <begin position="816"/>
        <end position="876"/>
    </location>
</feature>
<feature type="short sequence motif" description="Nuclear localization signal" evidence="2">
    <location>
        <begin position="848"/>
        <end position="855"/>
    </location>
</feature>
<feature type="compositionally biased region" description="Basic and acidic residues" evidence="3">
    <location>
        <begin position="819"/>
        <end position="831"/>
    </location>
</feature>
<feature type="compositionally biased region" description="Basic residues" evidence="3">
    <location>
        <begin position="849"/>
        <end position="864"/>
    </location>
</feature>
<keyword id="KW-0539">Nucleus</keyword>
<keyword id="KW-1185">Reference proteome</keyword>
<keyword id="KW-0677">Repeat</keyword>
<keyword id="KW-0853">WD repeat</keyword>
<accession>Q9LFE2</accession>
<accession>Q42339</accession>
<accession>Q8L830</accession>
<accession>Q93ZT0</accession>
<comment type="function">
    <text evidence="4">Essential protein involved in the regulation of cell division planes during embryogenesis which defines cell patterning, especially longitudinal division planes of the proembryo, probably via the regulation of embryo patterning genes expression patterns.</text>
</comment>
<comment type="subcellular location">
    <subcellularLocation>
        <location evidence="2 4">Nucleus</location>
    </subcellularLocation>
    <subcellularLocation>
        <location evidence="4">Nucleus</location>
        <location evidence="4">Nucleolus</location>
    </subcellularLocation>
</comment>
<comment type="tissue specificity">
    <text evidence="4">Preferentially expressed in dividing cells in a variety of tissues and meristematic regions.</text>
</comment>
<comment type="developmental stage">
    <text evidence="4">Expressed in young proliferating tissues, such as root tips, meristems, young leaves and floral buds (PubMed:17616738). Also observed in the mature embryo sac of the female gametophyte (PubMed:17616738). In embryos, first observed at low levels very early in the proembryo, accumulates strongly in embryos with more than eight cells and remains at high levels until cell division ceased prior to dormancy (PubMed:17616738). In seedlings, concentrated at the developing apex in all root tips and later in the developing flowers of the inflorescence (PubMed:17616738).</text>
</comment>
<comment type="disruption phenotype">
    <text evidence="4">Defective embryo arrested at preglobular stage characterized by aberrant cell division planes leading to an abnormal cell patterning; longitudinal division planes of the proembryo are frequently replaced by transverse divisions and less frequently by oblique divisions (PubMed:17616738). Altered embryo patterning genes expression patterns (PubMed:17616738).</text>
</comment>
<comment type="sequence caution" evidence="6">
    <conflict type="erroneous initiation">
        <sequence resource="EMBL-CDS" id="AAL07130"/>
    </conflict>
    <text>Truncated N-terminus.</text>
</comment>
<sequence>MAPHSLKKNYRCSRSLKQFYGGGPFIVSSDGSFIACACGDVINIVDSTDSSVKSTIEGESDTLTALALSPDDKLLFSAGHSRQIRVWDLETLKCIRSWKGHEGPVMGMACHASGGLLATAGADRKVLVWDVDGGFCTHYFRGHKGVVSSILFHPDSNKNILISGSDDATVRVWDLNAKNTEKKCLAIMEKHFSAVTSIALSEDGLTLFSAGRDKVVNLWDLHDYSCKATVATYEVLEAVTTVSSGTPFASFVASLDQKKSKKKESDSQATYFITVGERGVVRIWKSEGSICLYEQKSSDITVSSDDEESKRGFTAAAMLPSDHGLLCVTADQQFFFYSVVENVEETELVLSKRLVGYNEEIADMKFLGDEEQFLAVATNLEEVRVYDVATMSCSYVLAGHKEVVLSLDTCVSSSGNVLIVTGSKDKTVRLWNATSKSCIGVGTGHNGDILAVAFAKKSFSFFVSGSGDRTLKVWSLDGISEDSEEPINLKTRSVVAAHDKDINSVAVARNDSLVCTGSEDRTASIWRLPDLVHVVTLKGHKRRIFSVEFSTVDQCVMTASGDKTVKIWAISDGSCLKTFEGHTSSVLRASFITDGTQFVSCGADGLLKLWNVNTSECIATYDQHEDKVWALAVGKKTEMIATGGGDAVINLWHDSTASDKEDDFRKEEEAILRGQELENAVLDAEYTKAIRLAFELCRPHKVFELFSGLCRKRDSDEQIVKALQGLEKEEFRLLFEYVREWNTKPKLCHIAQFVLYKTFNILPPTEIVQVKGIGELLEGLIPYSQRHFSRIDRFVRSSFLLDYTLGEMSVIDPETVETEYPKDEKKKEKDVIAAMEQDTDELKQETPSRKRKSQKSKGKSNKKRLIAEAQGSVIAV</sequence>